<reference key="1">
    <citation type="journal article" date="1993" name="Gene">
        <title>A Bacillus subtilis large ORF coding for a polypeptide highly similar to polyketide synthases.</title>
        <authorList>
            <person name="Scotti C."/>
            <person name="Piatti M."/>
            <person name="Cuzzoni A."/>
            <person name="Perani P."/>
            <person name="Tognoni A."/>
            <person name="Grandi G."/>
            <person name="Galizzi A."/>
            <person name="Albertini A.M."/>
        </authorList>
    </citation>
    <scope>NUCLEOTIDE SEQUENCE [GENOMIC DNA]</scope>
    <source>
        <strain>168 / PB1424</strain>
    </source>
</reference>
<reference key="2">
    <citation type="journal article" date="1997" name="Nature">
        <title>The complete genome sequence of the Gram-positive bacterium Bacillus subtilis.</title>
        <authorList>
            <person name="Kunst F."/>
            <person name="Ogasawara N."/>
            <person name="Moszer I."/>
            <person name="Albertini A.M."/>
            <person name="Alloni G."/>
            <person name="Azevedo V."/>
            <person name="Bertero M.G."/>
            <person name="Bessieres P."/>
            <person name="Bolotin A."/>
            <person name="Borchert S."/>
            <person name="Borriss R."/>
            <person name="Boursier L."/>
            <person name="Brans A."/>
            <person name="Braun M."/>
            <person name="Brignell S.C."/>
            <person name="Bron S."/>
            <person name="Brouillet S."/>
            <person name="Bruschi C.V."/>
            <person name="Caldwell B."/>
            <person name="Capuano V."/>
            <person name="Carter N.M."/>
            <person name="Choi S.-K."/>
            <person name="Codani J.-J."/>
            <person name="Connerton I.F."/>
            <person name="Cummings N.J."/>
            <person name="Daniel R.A."/>
            <person name="Denizot F."/>
            <person name="Devine K.M."/>
            <person name="Duesterhoeft A."/>
            <person name="Ehrlich S.D."/>
            <person name="Emmerson P.T."/>
            <person name="Entian K.-D."/>
            <person name="Errington J."/>
            <person name="Fabret C."/>
            <person name="Ferrari E."/>
            <person name="Foulger D."/>
            <person name="Fritz C."/>
            <person name="Fujita M."/>
            <person name="Fujita Y."/>
            <person name="Fuma S."/>
            <person name="Galizzi A."/>
            <person name="Galleron N."/>
            <person name="Ghim S.-Y."/>
            <person name="Glaser P."/>
            <person name="Goffeau A."/>
            <person name="Golightly E.J."/>
            <person name="Grandi G."/>
            <person name="Guiseppi G."/>
            <person name="Guy B.J."/>
            <person name="Haga K."/>
            <person name="Haiech J."/>
            <person name="Harwood C.R."/>
            <person name="Henaut A."/>
            <person name="Hilbert H."/>
            <person name="Holsappel S."/>
            <person name="Hosono S."/>
            <person name="Hullo M.-F."/>
            <person name="Itaya M."/>
            <person name="Jones L.-M."/>
            <person name="Joris B."/>
            <person name="Karamata D."/>
            <person name="Kasahara Y."/>
            <person name="Klaerr-Blanchard M."/>
            <person name="Klein C."/>
            <person name="Kobayashi Y."/>
            <person name="Koetter P."/>
            <person name="Koningstein G."/>
            <person name="Krogh S."/>
            <person name="Kumano M."/>
            <person name="Kurita K."/>
            <person name="Lapidus A."/>
            <person name="Lardinois S."/>
            <person name="Lauber J."/>
            <person name="Lazarevic V."/>
            <person name="Lee S.-M."/>
            <person name="Levine A."/>
            <person name="Liu H."/>
            <person name="Masuda S."/>
            <person name="Mauel C."/>
            <person name="Medigue C."/>
            <person name="Medina N."/>
            <person name="Mellado R.P."/>
            <person name="Mizuno M."/>
            <person name="Moestl D."/>
            <person name="Nakai S."/>
            <person name="Noback M."/>
            <person name="Noone D."/>
            <person name="O'Reilly M."/>
            <person name="Ogawa K."/>
            <person name="Ogiwara A."/>
            <person name="Oudega B."/>
            <person name="Park S.-H."/>
            <person name="Parro V."/>
            <person name="Pohl T.M."/>
            <person name="Portetelle D."/>
            <person name="Porwollik S."/>
            <person name="Prescott A.M."/>
            <person name="Presecan E."/>
            <person name="Pujic P."/>
            <person name="Purnelle B."/>
            <person name="Rapoport G."/>
            <person name="Rey M."/>
            <person name="Reynolds S."/>
            <person name="Rieger M."/>
            <person name="Rivolta C."/>
            <person name="Rocha E."/>
            <person name="Roche B."/>
            <person name="Rose M."/>
            <person name="Sadaie Y."/>
            <person name="Sato T."/>
            <person name="Scanlan E."/>
            <person name="Schleich S."/>
            <person name="Schroeter R."/>
            <person name="Scoffone F."/>
            <person name="Sekiguchi J."/>
            <person name="Sekowska A."/>
            <person name="Seror S.J."/>
            <person name="Serror P."/>
            <person name="Shin B.-S."/>
            <person name="Soldo B."/>
            <person name="Sorokin A."/>
            <person name="Tacconi E."/>
            <person name="Takagi T."/>
            <person name="Takahashi H."/>
            <person name="Takemaru K."/>
            <person name="Takeuchi M."/>
            <person name="Tamakoshi A."/>
            <person name="Tanaka T."/>
            <person name="Terpstra P."/>
            <person name="Tognoni A."/>
            <person name="Tosato V."/>
            <person name="Uchiyama S."/>
            <person name="Vandenbol M."/>
            <person name="Vannier F."/>
            <person name="Vassarotti A."/>
            <person name="Viari A."/>
            <person name="Wambutt R."/>
            <person name="Wedler E."/>
            <person name="Wedler H."/>
            <person name="Weitzenegger T."/>
            <person name="Winters P."/>
            <person name="Wipat A."/>
            <person name="Yamamoto H."/>
            <person name="Yamane K."/>
            <person name="Yasumoto K."/>
            <person name="Yata K."/>
            <person name="Yoshida K."/>
            <person name="Yoshikawa H.-F."/>
            <person name="Zumstein E."/>
            <person name="Yoshikawa H."/>
            <person name="Danchin A."/>
        </authorList>
    </citation>
    <scope>NUCLEOTIDE SEQUENCE [LARGE SCALE GENOMIC DNA]</scope>
    <source>
        <strain>168</strain>
    </source>
</reference>
<reference key="3">
    <citation type="journal article" date="1999" name="Genome Res.">
        <title>Detecting and analyzing DNA sequencing errors: toward a higher quality of the Bacillus subtilis genome sequence.</title>
        <authorList>
            <person name="Medigue C."/>
            <person name="Rose M."/>
            <person name="Viari A."/>
            <person name="Danchin A."/>
        </authorList>
    </citation>
    <scope>SEQUENCE REVISION</scope>
</reference>
<reference key="4">
    <citation type="journal article" date="2009" name="Microbiology">
        <title>From a consortium sequence to a unified sequence: the Bacillus subtilis 168 reference genome a decade later.</title>
        <authorList>
            <person name="Barbe V."/>
            <person name="Cruveiller S."/>
            <person name="Kunst F."/>
            <person name="Lenoble P."/>
            <person name="Meurice G."/>
            <person name="Sekowska A."/>
            <person name="Vallenet D."/>
            <person name="Wang T."/>
            <person name="Moszer I."/>
            <person name="Medigue C."/>
            <person name="Danchin A."/>
        </authorList>
    </citation>
    <scope>SEQUENCE REVISION TO 2299-2300; 2398; 3384; 4141 AND 4232</scope>
</reference>
<reference key="5">
    <citation type="submission" date="1994-07" db="EMBL/GenBank/DDBJ databases">
        <authorList>
            <person name="Grandi G."/>
        </authorList>
    </citation>
    <scope>NUCLEOTIDE SEQUENCE [GENOMIC DNA] OF 3730-4538</scope>
    <source>
        <strain>168 / PB1424</strain>
    </source>
</reference>
<reference key="6">
    <citation type="journal article" date="2007" name="Proc. Natl. Acad. Sci. U.S.A.">
        <title>A singular enzymatic megacomplex from Bacillus subtilis.</title>
        <authorList>
            <person name="Straight P.D."/>
            <person name="Fischbach M.A."/>
            <person name="Walsh C.T."/>
            <person name="Rudner D.Z."/>
            <person name="Kolter R."/>
        </authorList>
    </citation>
    <scope>SUBCELLULAR LOCATION</scope>
    <source>
        <strain>168 / Marburg / ATCC 6051 / DSM 10 / JCM 1465 / NBRC 13719 / NCIMB 3610 / NRRL NRS-744 / VKM B-501</strain>
    </source>
</reference>
<reference key="7">
    <citation type="journal article" date="2007" name="Proc. Natl. Acad. Sci. U.S.A.">
        <title>The identification of bacillaene, the product of the PksX megacomplex in Bacillus subtilis.</title>
        <authorList>
            <person name="Butcher R.A."/>
            <person name="Schroeder F.C."/>
            <person name="Fischbach M.A."/>
            <person name="Straight P.D."/>
            <person name="Kolter R."/>
            <person name="Walsh C.T."/>
            <person name="Clardy J."/>
        </authorList>
    </citation>
    <scope>FUNCTION IN BACILLAENE BIOSYNTHESIS</scope>
    <source>
        <strain>168 / Marburg / ATCC 6051 / DSM 10 / JCM 1465 / NBRC 13719 / NCIMB 3610 / NRRL NRS-744 / VKM B-501</strain>
    </source>
</reference>
<keyword id="KW-0002">3D-structure</keyword>
<keyword id="KW-0012">Acyltransferase</keyword>
<keyword id="KW-0045">Antibiotic biosynthesis</keyword>
<keyword id="KW-0963">Cytoplasm</keyword>
<keyword id="KW-0511">Multifunctional enzyme</keyword>
<keyword id="KW-0521">NADP</keyword>
<keyword id="KW-0596">Phosphopantetheine</keyword>
<keyword id="KW-0597">Phosphoprotein</keyword>
<keyword id="KW-1185">Reference proteome</keyword>
<keyword id="KW-0677">Repeat</keyword>
<keyword id="KW-0808">Transferase</keyword>
<gene>
    <name type="primary">pksL</name>
    <name type="synonym">outG</name>
    <name type="synonym">pksA</name>
    <name type="synonym">pksX</name>
    <name type="ordered locus">BSU17190</name>
</gene>
<protein>
    <recommendedName>
        <fullName>Polyketide synthase PksL</fullName>
        <shortName>PKS</shortName>
    </recommendedName>
</protein>
<sequence length="4538" mass="506182">MRWRSNVKKITKQLTLSLKNPFIYHHVVYGQNVLPGLAYIDIIYQIFREHGFSCSELQLRNLSIYQPLTAEQDAVIVLNIQCAEKKEGQWQITAKGIEKRDGKEASEEKLYMKADMHADSPAIFEETLDLSQIKASAQNVVQLDDVYEQCRRQELVHSEYMKAKGCIYEEEDGVLLELSLGSEAMLHAEGFMFHPTLIDGSGVGANHLLTSLLKGEQRLYLPLFYESFSASALLQTDCMTRIKRSSVRREKELIYVTLEFFNASGEKVAELKNFTSKLVREAELISGKHQDAQETQMTRADTAERDKPADMVSSPVNSYSEAEQFVSQLIAEKINKPVEQVEKQVGYYQMGLNSSGLLEVVETISDKIGESLSPTLLFEHTTIAELSAFLAEEYAEHFSAAGSLGQNERARVSDSINDHKTVEGSRPAPIEAAGDIAIIGLAGRYPKAANIHEFWNNLKEGKDCVSEIPESRWDWQRLEGITSPSGKDISKWGGFIDDPDCFDPQFFRITPREAETMDPQERLFLETCWETIEDAGYTPKTLAKPKGRNKRQHVGVFAGVMHKDYTLVGAEEASAENVFPLSLNYAQIANRVSYFCNFHGPSMAVDTVCSSSLTAVHLALESIRHGECDVALAGGVNLSLHPNKYMTYGVWDMFSTDGHCRTFGKDGDGYVPAEGIGAVLLKPLRQAEEDGDRIYAVIKGSAVNHVGTVSGISVPSPVSQADLIETCLEKTGIDPRTISYVEAHGTGTSLGDPIEIQGLVKAFRQYTQDRQFCSIGSVKSNIGHAESAAGISGLSKVALQLHHQKLVPSLHSEELNPYVDFEKSPFYVQHETETWKQPVIKENGEDVPYPRRAGISSFGATGSNAHIILEEHIPQAAEQDVSLSSDSDISAVIPLSARNQERLRVYAKRLLDFLHDGIQIRDLAYTLQVGREPMEERVSFLASGIQELSDQLKAFIEGRKAIQHCWKGRVSRGSEPSRPAESVHKLLEQRKLDQIAEQWANGSGVDWKLLYEGSKPKRISLPTYPFERVRYWVPKAEKKTDRSKQERHILHPLLHQNVSDISGVRFRSAFTGREFFLKDHVIKGEHVLPGAALLEMVRAAVERAAADQFPTGFRLRNIVWVRPFAVTEQQKDIDVRLYPEENGEITFEICRDPESAEESPIVYGQGSAVLCEAGENPVINIEELKASYNGRTLSPFDCYEAYTEMGIHYGDSHRAIDSLYAGENGVLVKLTMPPVISDTEDHYILHPSMIDSAFQASIGLRLGGATSLEDRKAMLPFAIQDVRIFKGCEASMWARITYSEGSTAGDRMQKLDIDLCNEEGQVCVRLTSYSARVLETDQEGPSEANDTLLFEHIWEERAAERQELIEYDTYKVVVCDVGEQMESLQNHLDCTVLQHDTETIDERFEGYAIQLFEEIKQLMHSKTGGHTFIQVAVPALDEPQLLSGLTGLLKTAELENPKLTGQLIEIETGMSAGELFEILEENRRYPRDTHIRHWQGKRFVSKWKEVSGEHLSADMPWKDKGVYLITGGAGGLGFIFATEIANQTNDAVVILTGRSPLDERKKKKLKALQKLGIQAIYRQADLADKQTVDALLKETQNVYGDLDGIIHSAGLIKDNFIMKKKKEEVQTVLAPKVAGLIHLDEATKDIPLDFFILFSSGAGAVGSAGQADYAMANAFMNAFSEYRNGQAELHKRYGKTLSVCWPLWKDGGMQIDAETARMLKRETGMVAMETDRGIQALYHGWTSGKPQVLVASGVTDRIRAFLHETGHGKGQSHNIKKSSLNQEAEKADMIGEIDEEILREKAENYFKQVLSSVIKLPAGQIDAEAPLEDYGIDSIMIMHVTGQLEKVFGSLSKTLFFEYQDIRSLTRYFIDSRREKLLDILGFETGKPSVERKSEPEKQEIPVIPRKSGFLPLQDKEQKQVREKETEEIAIIGISGRYPQADNIDELWEKLRDGRDCITEIPADRWDHSLYYDEDKDKPGKTYSKWGGFMKDVDKFDPQFFHISPREAKLMDPQERLFLQCVYETMEDAGYTREHLGRKRDAELGGSVGVYVGVMYEEYQLYGAQEQVRGRSLALTGNPSSIANRVSYYFDFHGPSIALDTMCSSSLTAIHLACQSLQRGECEAAFAGGVNVSIHPNKYLMLGQNKFMSSKGRCESFGQGGDGYVPGEGVGAVLLKPLSKAVEDGDHIYGIIKGTAINHGGKTNGYSVPNPNAQADVIKKAFVEAKVDPRTVSYIEAHGTGTSLGDPIEITGLSKVFTQETDDKQFCAIGSAKSNIGHCESAAGIAGVTKVLLQMKYRQLAPSLHSNVLNPNIDFLNSPFKVQQELEEWKRPIISVNGKDIELPRIAGVSSFGAGGVNAHILIEEYAPEPVEERLPARKQPAVIVLSAKNEERLQKRAERLLHAIREQTYVEADLHRIAYTLQVGREAMKERLAFVAETMQELEEKLYECISGTENREYVYRGQVKSNKEAIAAFAADEDMSKTIEAWLQKGKYAKVLDLWVRGLRIDWSTLYQDQKPRRISLPAYPFARDRYWIDVNAKAEEKRTEEPFAPVQPVIPKPSVDREASGKPANITLQPLMTNQDRLERVPSDTETETITAEALCDELTAGLAEVLYMDQNEIDPDEAFIDIGMDSITGLEWIKAINKQYGTSLNVTKVYDYPTTRDFAVYLAHELSTQAGEKKQTETYTPIRQKTVVPAAKPANISLQPLEHHQPVQEEAEETIQYAAAEISASRQYTVAIETLHENLRESIADVLYMEPYEVDIDEAFIDIGMDSITGLEWIKAVNKQYGTSFTVTRVYDYPTIRDFAEMLKSELGTHLDRKIEHTDSFEAAQQKPAASSHPKPAERPLQPVQHPIKKEHEKKTVPVLQDRPEDAIAIVGMSGRYPGARNVREYWDNLVHARNAIRDIPTSRWDVDKYYDPVLNKKGKVYCKSMGMLDDIEHFDPLFFNIPPSEAELMDPQHRIFLQEGYKAFEDAGYNARTLNEKKCGVYLGIMSNEYGVMLNRQSRANATGNSFAIAAARIPYFLNLKGPAIPIDTACSSSLVGTHLARQALINKEIDMALVGGVSLYLTPESYMSMCEAGMLSPDGQCKAFDNGANGFVPGEGAGALVLKRLKDAEADRDHIYGIIIGSGINQDGKTNGITAPSAKSQMDLERDIYETYGIHPESISYVEMHGTGTKQGDPIELEALSTVFQEKTDKKQFCAIGSVKSNIGHTSAAAGVAGVQKVLLCMNHKTLVPTLNFTTPNEHFEFEHSPLYVNTELKPWETADGKPRRACVSSFGYSGTNAHIVIEEYQPEKRNDRLTKQHRSALFVLSAKKEKQLKAYAEAMKDFVTSNEDIDLEDMAYTLQTGREAMDYRMAFLADSREMLIKALDDYLAEMPNGSIFAAHVKTKKSEIKLFETDHDAKALLQTWIEKKRLEKVAELWVKGLQIDWNKLYGEYTPRRISLPAYPFAEEYYWLPTQEGEPETIATAMPQFELMPKRCFLRKQWQPCPIEPAEMTNQTVAILANEETMALAEELSAYFSTYRIFDSQELDRVSAADYEHVAGAIDLIGCGTSHEHSMGWINWLQKLIEQGRASKHHLTVLGVTKGLEAYANEGVLLSGASRAGLYRMLQSEYSHLTSRHADMECEASHEELARLIAVEYYAKSTESEVCYRNGQRYRAYLTEQPAEAALSHKQVSFSTDKVLLITGGTRGLGLLCARHFVKTYGVKRLVLIGREELPPRDQWNSVKISSLAEKIKAVQELEDMGAQVQVLSLDLTDRVAVEQSLKTIHETMGAIGGVIHCAGMVNKQNPAFIRKSLEEIGQVLEPKVEGLQTLFDLLQDEPLAFFTLFSSVSAAIPALAAGQADYAMANAFMDYFAEAHQDKCPIVSIQWPNWKETGLGEVRSKALEQTGLISLTNDEGLQLLDQILSDRQYAVVLPAVPDTNVWKPDKLMQPSLPVEALSHPETKEQTSTRNLFPETVDWLVTLFSDELKIAAEDFETDEPFQEYGIDSIILAQLVQQMNQQLNGDIDPSILFEYPTIESFAHWLISKYDISAVLQPSVPEKQTPLKPQSAMKQKLVPEQRPQQISHEKTALLAEDIAIIGLSCRFPGAETLEEYWDLIRDGRSAIAPVPPERFGNSSSNYAGLIDEMNRFDHDFFMMSESDVRAMDPQALAVLEESLKLWYHAGYTEKEVKGMRAGVYIGGRSQHKPDPASLSKAKNPIVAGGQNYLAANISQFFDLKGPSIVLDTACSSALVGLNMAIQALRSGDIEAAVVGGVSLLDADAHRMFHERGLLCDKPSFHIFDKRADGVILGEGVGMVLVKTVNQAVEDGDSIYAVIKAAAINNDGRTAGPSSPNLEAQKDVMLSALEKSGKKTEEISYLEANGSGSAVTDLLELKAIQSIYRSESKAPLGLGSVKPNIGHPLCAEGIASLIKVALMLKHRQLVPFLSGNENMPYFDIEKTDLYFSRSQAEWKETTPAAAINCFADGGTNAHLIIEGWRDSAERPIRRKPLPLPELNRQPVLIKPSAQNVQKKVHSDTGASKDMFWKTFK</sequence>
<accession>Q05470</accession>
<feature type="chain" id="PRO_0000180299" description="Polyketide synthase PksL">
    <location>
        <begin position="1"/>
        <end position="4538"/>
    </location>
</feature>
<feature type="domain" description="PKS/mFAS DH 1" evidence="3">
    <location>
        <begin position="1"/>
        <end position="285"/>
    </location>
</feature>
<feature type="domain" description="Carrier 1" evidence="1">
    <location>
        <begin position="320"/>
        <end position="394"/>
    </location>
</feature>
<feature type="domain" description="Ketosynthase family 3 (KS3) 1" evidence="2">
    <location>
        <begin position="433"/>
        <end position="871"/>
    </location>
</feature>
<feature type="domain" description="PKS/mFAS DH 2" evidence="3">
    <location>
        <begin position="1051"/>
        <end position="1340"/>
    </location>
</feature>
<feature type="domain" description="Carrier 2" evidence="1">
    <location>
        <begin position="1800"/>
        <end position="1873"/>
    </location>
</feature>
<feature type="domain" description="Ketosynthase family 3 (KS3) 2" evidence="2">
    <location>
        <begin position="1926"/>
        <end position="2365"/>
    </location>
</feature>
<feature type="domain" description="Carrier 3" evidence="1">
    <location>
        <begin position="2597"/>
        <end position="2674"/>
    </location>
</feature>
<feature type="domain" description="Carrier 4" evidence="1">
    <location>
        <begin position="2738"/>
        <end position="2815"/>
    </location>
</feature>
<feature type="domain" description="Ketosynthase family 3 (KS3) 3" evidence="2">
    <location>
        <begin position="2873"/>
        <end position="3294"/>
    </location>
</feature>
<feature type="domain" description="Carrier 5" evidence="1">
    <location>
        <begin position="3960"/>
        <end position="4037"/>
    </location>
</feature>
<feature type="domain" description="Ketosynthase family 3 (KS3) 4" evidence="2">
    <location>
        <begin position="4082"/>
        <end position="4485"/>
    </location>
</feature>
<feature type="region of interest" description="N-terminal hotdog fold 1" evidence="3">
    <location>
        <begin position="1"/>
        <end position="123"/>
    </location>
</feature>
<feature type="region of interest" description="C-terminal hotdog fold 1" evidence="3">
    <location>
        <begin position="138"/>
        <end position="285"/>
    </location>
</feature>
<feature type="region of interest" description="Disordered" evidence="5">
    <location>
        <begin position="289"/>
        <end position="314"/>
    </location>
</feature>
<feature type="region of interest" description="Dehydratase">
    <location>
        <begin position="1048"/>
        <end position="1226"/>
    </location>
</feature>
<feature type="region of interest" description="N-terminal hotdog fold 2" evidence="3">
    <location>
        <begin position="1051"/>
        <end position="1175"/>
    </location>
</feature>
<feature type="region of interest" description="C-terminal hotdog fold 2" evidence="3">
    <location>
        <begin position="1189"/>
        <end position="1340"/>
    </location>
</feature>
<feature type="region of interest" description="Beta-ketoacyl reductase 1">
    <location>
        <begin position="1520"/>
        <end position="1713"/>
    </location>
</feature>
<feature type="region of interest" description="Disordered" evidence="5">
    <location>
        <begin position="2546"/>
        <end position="2568"/>
    </location>
</feature>
<feature type="region of interest" description="Disordered" evidence="5">
    <location>
        <begin position="2828"/>
        <end position="2854"/>
    </location>
</feature>
<feature type="region of interest" description="Beta-ketoacyl reductase 2">
    <location>
        <begin position="3686"/>
        <end position="3887"/>
    </location>
</feature>
<feature type="active site" description="Proton acceptor; for dehydratase activity 1" evidence="3">
    <location>
        <position position="26"/>
    </location>
</feature>
<feature type="active site" description="Proton donor; for dehydratase activity 1" evidence="3">
    <location>
        <position position="199"/>
    </location>
</feature>
<feature type="active site" description="For beta-ketoacyl synthase 1 activity" evidence="2">
    <location>
        <position position="609"/>
    </location>
</feature>
<feature type="active site" description="For beta-ketoacyl synthase 1 activity" evidence="2">
    <location>
        <position position="744"/>
    </location>
</feature>
<feature type="active site" description="For beta-ketoacyl synthase 1 activity" evidence="2">
    <location>
        <position position="784"/>
    </location>
</feature>
<feature type="active site" description="Proton acceptor; for dehydratase activity 2" evidence="3">
    <location>
        <position position="1080"/>
    </location>
</feature>
<feature type="active site" description="Proton donor; for dehydratase activity 2" evidence="3">
    <location>
        <position position="1251"/>
    </location>
</feature>
<feature type="active site" description="For beta-ketoacyl synthase 2 activity" evidence="2">
    <location>
        <position position="2103"/>
    </location>
</feature>
<feature type="active site" description="For beta-ketoacyl synthase 2 activity" evidence="2">
    <location>
        <position position="2238"/>
    </location>
</feature>
<feature type="active site" description="For beta-ketoacyl synthase 2 activity" evidence="2">
    <location>
        <position position="2278"/>
    </location>
</feature>
<feature type="active site" description="For beta-ketoacyl synthase 3 activity" evidence="2">
    <location>
        <position position="3040"/>
    </location>
</feature>
<feature type="active site" description="For beta-ketoacyl synthase 3 activity" evidence="2">
    <location>
        <position position="3175"/>
    </location>
</feature>
<feature type="active site" description="For beta-ketoacyl synthase 3 activity" evidence="2">
    <location>
        <position position="3215"/>
    </location>
</feature>
<feature type="active site" description="For beta-ketoacyl synthase 4 activity" evidence="4">
    <location>
        <position position="4237"/>
    </location>
</feature>
<feature type="modified residue" description="O-(pantetheine 4'-phosphoryl)serine" evidence="1">
    <location>
        <position position="354"/>
    </location>
</feature>
<feature type="modified residue" description="O-(pantetheine 4'-phosphoryl)serine" evidence="1">
    <location>
        <position position="1834"/>
    </location>
</feature>
<feature type="modified residue" description="O-(pantetheine 4'-phosphoryl)serine" evidence="1">
    <location>
        <position position="2634"/>
    </location>
</feature>
<feature type="modified residue" description="O-(pantetheine 4'-phosphoryl)serine" evidence="1">
    <location>
        <position position="2775"/>
    </location>
</feature>
<feature type="modified residue" description="O-(pantetheine 4'-phosphoryl)serine" evidence="1">
    <location>
        <position position="3997"/>
    </location>
</feature>
<feature type="sequence conflict" description="In Ref. 1; AAA85145/CAA78479." evidence="8" ref="1">
    <original>QL</original>
    <variation>HV</variation>
    <location>
        <begin position="2299"/>
        <end position="2300"/>
    </location>
</feature>
<feature type="sequence conflict" description="In Ref. 1; AAA85145/CAA78479." evidence="8" ref="1">
    <original>A</original>
    <variation>P</variation>
    <location>
        <position position="2398"/>
    </location>
</feature>
<feature type="sequence conflict" description="In Ref. 1; AAA85145/CAA78479." evidence="8" ref="1">
    <original>G</original>
    <variation>A</variation>
    <location>
        <position position="3384"/>
    </location>
</feature>
<feature type="sequence conflict" description="In Ref. 1; AAA85145/CAA78479 and 5; CAA84504." evidence="8" ref="1 5">
    <original>A</original>
    <variation>R</variation>
    <location>
        <position position="4041"/>
    </location>
</feature>
<feature type="sequence conflict" description="In Ref. 1; AAA85145/CAA78479 and 5; CAA84504." evidence="8" ref="1 5">
    <original>V</original>
    <variation>L</variation>
    <location>
        <position position="4232"/>
    </location>
</feature>
<feature type="strand" evidence="9">
    <location>
        <begin position="8"/>
        <end position="17"/>
    </location>
</feature>
<feature type="helix" evidence="9">
    <location>
        <begin position="21"/>
        <end position="24"/>
    </location>
</feature>
<feature type="strand" evidence="9">
    <location>
        <begin position="26"/>
        <end position="28"/>
    </location>
</feature>
<feature type="strand" evidence="9">
    <location>
        <begin position="31"/>
        <end position="34"/>
    </location>
</feature>
<feature type="helix" evidence="9">
    <location>
        <begin position="36"/>
        <end position="38"/>
    </location>
</feature>
<feature type="helix" evidence="9">
    <location>
        <begin position="39"/>
        <end position="49"/>
    </location>
</feature>
<feature type="helix" evidence="9">
    <location>
        <begin position="54"/>
        <end position="56"/>
    </location>
</feature>
<feature type="strand" evidence="9">
    <location>
        <begin position="58"/>
        <end position="64"/>
    </location>
</feature>
<feature type="strand" evidence="9">
    <location>
        <begin position="68"/>
        <end position="70"/>
    </location>
</feature>
<feature type="strand" evidence="9">
    <location>
        <begin position="75"/>
        <end position="86"/>
    </location>
</feature>
<feature type="strand" evidence="9">
    <location>
        <begin position="89"/>
        <end position="99"/>
    </location>
</feature>
<feature type="strand" evidence="9">
    <location>
        <begin position="101"/>
        <end position="103"/>
    </location>
</feature>
<feature type="strand" evidence="9">
    <location>
        <begin position="109"/>
        <end position="117"/>
    </location>
</feature>
<feature type="helix" evidence="9">
    <location>
        <begin position="130"/>
        <end position="135"/>
    </location>
</feature>
<feature type="strand" evidence="9">
    <location>
        <begin position="138"/>
        <end position="142"/>
    </location>
</feature>
<feature type="helix" evidence="9">
    <location>
        <begin position="143"/>
        <end position="152"/>
    </location>
</feature>
<feature type="strand" evidence="9">
    <location>
        <begin position="155"/>
        <end position="157"/>
    </location>
</feature>
<feature type="helix" evidence="9">
    <location>
        <begin position="159"/>
        <end position="161"/>
    </location>
</feature>
<feature type="strand" evidence="9">
    <location>
        <begin position="164"/>
        <end position="170"/>
    </location>
</feature>
<feature type="strand" evidence="9">
    <location>
        <begin position="173"/>
        <end position="179"/>
    </location>
</feature>
<feature type="helix" evidence="9">
    <location>
        <begin position="182"/>
        <end position="185"/>
    </location>
</feature>
<feature type="helix" evidence="9">
    <location>
        <begin position="186"/>
        <end position="190"/>
    </location>
</feature>
<feature type="helix" evidence="9">
    <location>
        <begin position="195"/>
        <end position="208"/>
    </location>
</feature>
<feature type="helix" evidence="9">
    <location>
        <begin position="210"/>
        <end position="213"/>
    </location>
</feature>
<feature type="strand" evidence="9">
    <location>
        <begin position="220"/>
        <end position="232"/>
    </location>
</feature>
<feature type="strand" evidence="9">
    <location>
        <begin position="236"/>
        <end position="243"/>
    </location>
</feature>
<feature type="helix" evidence="9">
    <location>
        <begin position="244"/>
        <end position="246"/>
    </location>
</feature>
<feature type="strand" evidence="9">
    <location>
        <begin position="248"/>
        <end position="250"/>
    </location>
</feature>
<feature type="strand" evidence="9">
    <location>
        <begin position="253"/>
        <end position="261"/>
    </location>
</feature>
<feature type="strand" evidence="9">
    <location>
        <begin position="265"/>
        <end position="278"/>
    </location>
</feature>
<feature type="strand" evidence="10">
    <location>
        <begin position="2876"/>
        <end position="2885"/>
    </location>
</feature>
<feature type="strand" evidence="10">
    <location>
        <begin position="2888"/>
        <end position="2890"/>
    </location>
</feature>
<feature type="helix" evidence="10">
    <location>
        <begin position="2891"/>
        <end position="2899"/>
    </location>
</feature>
<feature type="strand" evidence="10">
    <location>
        <begin position="2905"/>
        <end position="2907"/>
    </location>
</feature>
<feature type="turn" evidence="10">
    <location>
        <begin position="2910"/>
        <end position="2912"/>
    </location>
</feature>
<feature type="helix" evidence="10">
    <location>
        <begin position="2915"/>
        <end position="2917"/>
    </location>
</feature>
<feature type="strand" evidence="10">
    <location>
        <begin position="2933"/>
        <end position="2935"/>
    </location>
</feature>
<feature type="helix" evidence="10">
    <location>
        <begin position="2945"/>
        <end position="2948"/>
    </location>
</feature>
<feature type="helix" evidence="10">
    <location>
        <begin position="2952"/>
        <end position="2955"/>
    </location>
</feature>
<feature type="helix" evidence="10">
    <location>
        <begin position="2960"/>
        <end position="2976"/>
    </location>
</feature>
<feature type="helix" evidence="10">
    <location>
        <begin position="2980"/>
        <end position="2983"/>
    </location>
</feature>
<feature type="strand" evidence="10">
    <location>
        <begin position="2988"/>
        <end position="2993"/>
    </location>
</feature>
<feature type="helix" evidence="10">
    <location>
        <begin position="2998"/>
        <end position="3003"/>
    </location>
</feature>
<feature type="helix" evidence="10">
    <location>
        <begin position="3016"/>
        <end position="3027"/>
    </location>
</feature>
<feature type="strand" evidence="10">
    <location>
        <begin position="3033"/>
        <end position="3036"/>
    </location>
</feature>
<feature type="helix" evidence="10">
    <location>
        <begin position="3039"/>
        <end position="3041"/>
    </location>
</feature>
<feature type="helix" evidence="10">
    <location>
        <begin position="3042"/>
        <end position="3055"/>
    </location>
</feature>
<feature type="strand" evidence="10">
    <location>
        <begin position="3060"/>
        <end position="3068"/>
    </location>
</feature>
<feature type="helix" evidence="10">
    <location>
        <begin position="3073"/>
        <end position="3076"/>
    </location>
</feature>
<feature type="strand" evidence="10">
    <location>
        <begin position="3106"/>
        <end position="3114"/>
    </location>
</feature>
<feature type="helix" evidence="10">
    <location>
        <begin position="3115"/>
        <end position="3120"/>
    </location>
</feature>
<feature type="strand" evidence="10">
    <location>
        <begin position="3127"/>
        <end position="3136"/>
    </location>
</feature>
<feature type="helix" evidence="10">
    <location>
        <begin position="3148"/>
        <end position="3162"/>
    </location>
</feature>
<feature type="helix" evidence="10">
    <location>
        <begin position="3166"/>
        <end position="3168"/>
    </location>
</feature>
<feature type="strand" evidence="10">
    <location>
        <begin position="3171"/>
        <end position="3173"/>
    </location>
</feature>
<feature type="strand" evidence="11">
    <location>
        <begin position="3178"/>
        <end position="3180"/>
    </location>
</feature>
<feature type="helix" evidence="10">
    <location>
        <begin position="3182"/>
        <end position="3195"/>
    </location>
</feature>
<feature type="strand" evidence="10">
    <location>
        <begin position="3204"/>
        <end position="3207"/>
    </location>
</feature>
<feature type="helix" evidence="10">
    <location>
        <begin position="3210"/>
        <end position="3213"/>
    </location>
</feature>
<feature type="helix" evidence="10">
    <location>
        <begin position="3217"/>
        <end position="3219"/>
    </location>
</feature>
<feature type="helix" evidence="10">
    <location>
        <begin position="3220"/>
        <end position="3233"/>
    </location>
</feature>
<feature type="strand" evidence="10">
    <location>
        <begin position="3244"/>
        <end position="3246"/>
    </location>
</feature>
<feature type="helix" evidence="11">
    <location>
        <begin position="3252"/>
        <end position="3254"/>
    </location>
</feature>
<feature type="strand" evidence="10">
    <location>
        <begin position="3255"/>
        <end position="3259"/>
    </location>
</feature>
<feature type="strand" evidence="10">
    <location>
        <begin position="3275"/>
        <end position="3281"/>
    </location>
</feature>
<feature type="strand" evidence="10">
    <location>
        <begin position="3285"/>
        <end position="3293"/>
    </location>
</feature>
<feature type="strand" evidence="10">
    <location>
        <begin position="3311"/>
        <end position="3319"/>
    </location>
</feature>
<feature type="helix" evidence="10">
    <location>
        <begin position="3320"/>
        <end position="3336"/>
    </location>
</feature>
<feature type="helix" evidence="10">
    <location>
        <begin position="3342"/>
        <end position="3351"/>
    </location>
</feature>
<feature type="strand" evidence="10">
    <location>
        <begin position="3357"/>
        <end position="3366"/>
    </location>
</feature>
<feature type="helix" evidence="10">
    <location>
        <begin position="3367"/>
        <end position="3379"/>
    </location>
</feature>
<feature type="strand" evidence="10">
    <location>
        <begin position="3386"/>
        <end position="3390"/>
    </location>
</feature>
<feature type="helix" evidence="10">
    <location>
        <begin position="3391"/>
        <end position="3393"/>
    </location>
</feature>
<feature type="helix" evidence="10">
    <location>
        <begin position="3395"/>
        <end position="3403"/>
    </location>
</feature>
<feature type="helix" evidence="10">
    <location>
        <begin position="3405"/>
        <end position="3416"/>
    </location>
</feature>
<feature type="helix" evidence="10">
    <location>
        <begin position="3420"/>
        <end position="3429"/>
    </location>
</feature>
<feature type="helix" evidence="10">
    <location>
        <begin position="3435"/>
        <end position="3438"/>
    </location>
</feature>
<organism>
    <name type="scientific">Bacillus subtilis (strain 168)</name>
    <dbReference type="NCBI Taxonomy" id="224308"/>
    <lineage>
        <taxon>Bacteria</taxon>
        <taxon>Bacillati</taxon>
        <taxon>Bacillota</taxon>
        <taxon>Bacilli</taxon>
        <taxon>Bacillales</taxon>
        <taxon>Bacillaceae</taxon>
        <taxon>Bacillus</taxon>
    </lineage>
</organism>
<proteinExistence type="evidence at protein level"/>
<comment type="function">
    <text evidence="7">Involved in some intermediate steps for the synthesis of the antibiotic polyketide bacillaene which is involved in secondary metabolism.</text>
</comment>
<comment type="cofactor">
    <cofactor evidence="8">
        <name>pantetheine 4'-phosphate</name>
        <dbReference type="ChEBI" id="CHEBI:47942"/>
    </cofactor>
    <text evidence="8">Binds 5 phosphopantetheines covalently.</text>
</comment>
<comment type="pathway">
    <text>Antibiotic biosynthesis; bacillaene biosynthesis.</text>
</comment>
<comment type="subcellular location">
    <subcellularLocation>
        <location evidence="6">Cytoplasm</location>
    </subcellularLocation>
</comment>
<comment type="sequence caution" evidence="8">
    <conflict type="frameshift">
        <sequence resource="EMBL-CDS" id="AAA85145"/>
    </conflict>
</comment>
<comment type="sequence caution" evidence="8">
    <conflict type="frameshift">
        <sequence resource="EMBL-CDS" id="CAA78479"/>
    </conflict>
</comment>
<evidence type="ECO:0000255" key="1">
    <source>
        <dbReference type="PROSITE-ProRule" id="PRU00258"/>
    </source>
</evidence>
<evidence type="ECO:0000255" key="2">
    <source>
        <dbReference type="PROSITE-ProRule" id="PRU01348"/>
    </source>
</evidence>
<evidence type="ECO:0000255" key="3">
    <source>
        <dbReference type="PROSITE-ProRule" id="PRU01363"/>
    </source>
</evidence>
<evidence type="ECO:0000255" key="4">
    <source>
        <dbReference type="PROSITE-ProRule" id="PRU10022"/>
    </source>
</evidence>
<evidence type="ECO:0000256" key="5">
    <source>
        <dbReference type="SAM" id="MobiDB-lite"/>
    </source>
</evidence>
<evidence type="ECO:0000269" key="6">
    <source>
    </source>
</evidence>
<evidence type="ECO:0000269" key="7">
    <source>
    </source>
</evidence>
<evidence type="ECO:0000305" key="8"/>
<evidence type="ECO:0007829" key="9">
    <source>
        <dbReference type="PDB" id="5E1V"/>
    </source>
</evidence>
<evidence type="ECO:0007829" key="10">
    <source>
        <dbReference type="PDB" id="5E5N"/>
    </source>
</evidence>
<evidence type="ECO:0007829" key="11">
    <source>
        <dbReference type="PDB" id="5E6K"/>
    </source>
</evidence>
<dbReference type="EMBL" id="U11039">
    <property type="protein sequence ID" value="AAA85145.1"/>
    <property type="status" value="ALT_FRAME"/>
    <property type="molecule type" value="Genomic_DNA"/>
</dbReference>
<dbReference type="EMBL" id="AL009126">
    <property type="protein sequence ID" value="CAB13602.3"/>
    <property type="molecule type" value="Genomic_DNA"/>
</dbReference>
<dbReference type="EMBL" id="Z14098">
    <property type="protein sequence ID" value="CAA78479.1"/>
    <property type="status" value="ALT_FRAME"/>
    <property type="molecule type" value="Genomic_DNA"/>
</dbReference>
<dbReference type="EMBL" id="Z35133">
    <property type="protein sequence ID" value="CAA84504.1"/>
    <property type="molecule type" value="Genomic_DNA"/>
</dbReference>
<dbReference type="PIR" id="S25021">
    <property type="entry name" value="PN0637"/>
</dbReference>
<dbReference type="RefSeq" id="NP_389600.3">
    <property type="nucleotide sequence ID" value="NC_000964.3"/>
</dbReference>
<dbReference type="RefSeq" id="WP_010886513.1">
    <property type="nucleotide sequence ID" value="NZ_OZ025638.1"/>
</dbReference>
<dbReference type="PDB" id="5E1V">
    <property type="method" value="X-ray"/>
    <property type="resolution" value="1.87 A"/>
    <property type="chains" value="A/B=6-279"/>
</dbReference>
<dbReference type="PDB" id="5E5N">
    <property type="method" value="X-ray"/>
    <property type="resolution" value="2.00 A"/>
    <property type="chains" value="A/B/C/D=2870-3466"/>
</dbReference>
<dbReference type="PDB" id="5E6K">
    <property type="method" value="X-ray"/>
    <property type="resolution" value="2.16 A"/>
    <property type="chains" value="A/B=2870-3466"/>
</dbReference>
<dbReference type="PDB" id="5ENY">
    <property type="method" value="X-ray"/>
    <property type="resolution" value="4.00 A"/>
    <property type="chains" value="A/B/C/D/E/F/G/H=2719-3462"/>
</dbReference>
<dbReference type="PDB" id="5ERF">
    <property type="method" value="X-ray"/>
    <property type="resolution" value="3.10 A"/>
    <property type="chains" value="A/B=2870-3466"/>
</dbReference>
<dbReference type="PDBsum" id="5E1V"/>
<dbReference type="PDBsum" id="5E5N"/>
<dbReference type="PDBsum" id="5E6K"/>
<dbReference type="PDBsum" id="5ENY"/>
<dbReference type="PDBsum" id="5ERF"/>
<dbReference type="SMR" id="Q05470"/>
<dbReference type="FunCoup" id="Q05470">
    <property type="interactions" value="10"/>
</dbReference>
<dbReference type="STRING" id="224308.BSU17190"/>
<dbReference type="PaxDb" id="224308-BSU17190"/>
<dbReference type="EnsemblBacteria" id="CAB13602">
    <property type="protein sequence ID" value="CAB13602"/>
    <property type="gene ID" value="BSU_17190"/>
</dbReference>
<dbReference type="GeneID" id="940032"/>
<dbReference type="KEGG" id="bsu:BSU17190"/>
<dbReference type="PATRIC" id="fig|224308.43.peg.1815"/>
<dbReference type="eggNOG" id="COG0236">
    <property type="taxonomic scope" value="Bacteria"/>
</dbReference>
<dbReference type="eggNOG" id="COG0300">
    <property type="taxonomic scope" value="Bacteria"/>
</dbReference>
<dbReference type="eggNOG" id="COG3321">
    <property type="taxonomic scope" value="Bacteria"/>
</dbReference>
<dbReference type="eggNOG" id="COG4221">
    <property type="taxonomic scope" value="Bacteria"/>
</dbReference>
<dbReference type="InParanoid" id="Q05470"/>
<dbReference type="OrthoDB" id="2897140at2"/>
<dbReference type="BioCyc" id="BSUB:BSU17190-MONOMER"/>
<dbReference type="UniPathway" id="UPA01003"/>
<dbReference type="EvolutionaryTrace" id="Q05470"/>
<dbReference type="Proteomes" id="UP000001570">
    <property type="component" value="Chromosome"/>
</dbReference>
<dbReference type="GO" id="GO:0005737">
    <property type="term" value="C:cytoplasm"/>
    <property type="evidence" value="ECO:0000318"/>
    <property type="project" value="GO_Central"/>
</dbReference>
<dbReference type="GO" id="GO:0004315">
    <property type="term" value="F:3-oxoacyl-[acyl-carrier-protein] synthase activity"/>
    <property type="evidence" value="ECO:0007669"/>
    <property type="project" value="InterPro"/>
</dbReference>
<dbReference type="GO" id="GO:0004312">
    <property type="term" value="F:fatty acid synthase activity"/>
    <property type="evidence" value="ECO:0000318"/>
    <property type="project" value="GO_Central"/>
</dbReference>
<dbReference type="GO" id="GO:0016491">
    <property type="term" value="F:oxidoreductase activity"/>
    <property type="evidence" value="ECO:0007669"/>
    <property type="project" value="InterPro"/>
</dbReference>
<dbReference type="GO" id="GO:0031177">
    <property type="term" value="F:phosphopantetheine binding"/>
    <property type="evidence" value="ECO:0007669"/>
    <property type="project" value="InterPro"/>
</dbReference>
<dbReference type="GO" id="GO:0017000">
    <property type="term" value="P:antibiotic biosynthetic process"/>
    <property type="evidence" value="ECO:0007669"/>
    <property type="project" value="UniProtKB-KW"/>
</dbReference>
<dbReference type="GO" id="GO:0071770">
    <property type="term" value="P:DIM/DIP cell wall layer assembly"/>
    <property type="evidence" value="ECO:0000318"/>
    <property type="project" value="GO_Central"/>
</dbReference>
<dbReference type="GO" id="GO:0006633">
    <property type="term" value="P:fatty acid biosynthetic process"/>
    <property type="evidence" value="ECO:0000318"/>
    <property type="project" value="GO_Central"/>
</dbReference>
<dbReference type="CDD" id="cd08953">
    <property type="entry name" value="KR_2_SDR_x"/>
    <property type="match status" value="2"/>
</dbReference>
<dbReference type="CDD" id="cd00833">
    <property type="entry name" value="PKS"/>
    <property type="match status" value="4"/>
</dbReference>
<dbReference type="FunFam" id="1.10.1200.10:FF:000019">
    <property type="entry name" value="Phenolpthiocerol synthesis type-I polyketide synthase PPSA"/>
    <property type="match status" value="1"/>
</dbReference>
<dbReference type="FunFam" id="3.40.47.10:FF:000019">
    <property type="entry name" value="Polyketide synthase type I"/>
    <property type="match status" value="3"/>
</dbReference>
<dbReference type="Gene3D" id="1.10.1240.100">
    <property type="match status" value="3"/>
</dbReference>
<dbReference type="Gene3D" id="3.40.47.10">
    <property type="match status" value="4"/>
</dbReference>
<dbReference type="Gene3D" id="1.10.1200.10">
    <property type="entry name" value="ACP-like"/>
    <property type="match status" value="5"/>
</dbReference>
<dbReference type="Gene3D" id="3.40.50.720">
    <property type="entry name" value="NAD(P)-binding Rossmann-like Domain"/>
    <property type="match status" value="2"/>
</dbReference>
<dbReference type="Gene3D" id="3.10.129.110">
    <property type="entry name" value="Polyketide synthase dehydratase"/>
    <property type="match status" value="2"/>
</dbReference>
<dbReference type="InterPro" id="IPR036736">
    <property type="entry name" value="ACP-like_sf"/>
</dbReference>
<dbReference type="InterPro" id="IPR018201">
    <property type="entry name" value="Ketoacyl_synth_AS"/>
</dbReference>
<dbReference type="InterPro" id="IPR014031">
    <property type="entry name" value="Ketoacyl_synth_C"/>
</dbReference>
<dbReference type="InterPro" id="IPR014030">
    <property type="entry name" value="Ketoacyl_synth_N"/>
</dbReference>
<dbReference type="InterPro" id="IPR036291">
    <property type="entry name" value="NAD(P)-bd_dom_sf"/>
</dbReference>
<dbReference type="InterPro" id="IPR020841">
    <property type="entry name" value="PKS_Beta-ketoAc_synthase_dom"/>
</dbReference>
<dbReference type="InterPro" id="IPR042104">
    <property type="entry name" value="PKS_dehydratase_sf"/>
</dbReference>
<dbReference type="InterPro" id="IPR020807">
    <property type="entry name" value="PKS_DH"/>
</dbReference>
<dbReference type="InterPro" id="IPR049551">
    <property type="entry name" value="PKS_DH_C"/>
</dbReference>
<dbReference type="InterPro" id="IPR049552">
    <property type="entry name" value="PKS_DH_N"/>
</dbReference>
<dbReference type="InterPro" id="IPR013968">
    <property type="entry name" value="PKS_KR"/>
</dbReference>
<dbReference type="InterPro" id="IPR049900">
    <property type="entry name" value="PKS_mFAS_DH"/>
</dbReference>
<dbReference type="InterPro" id="IPR050091">
    <property type="entry name" value="PKS_NRPS_Biosynth_Enz"/>
</dbReference>
<dbReference type="InterPro" id="IPR020806">
    <property type="entry name" value="PKS_PP-bd"/>
</dbReference>
<dbReference type="InterPro" id="IPR009081">
    <property type="entry name" value="PP-bd_ACP"/>
</dbReference>
<dbReference type="InterPro" id="IPR006162">
    <property type="entry name" value="Ppantetheine_attach_site"/>
</dbReference>
<dbReference type="InterPro" id="IPR011254">
    <property type="entry name" value="Prismane-like_sf"/>
</dbReference>
<dbReference type="InterPro" id="IPR054514">
    <property type="entry name" value="RhiE-like_linker"/>
</dbReference>
<dbReference type="InterPro" id="IPR016039">
    <property type="entry name" value="Thiolase-like"/>
</dbReference>
<dbReference type="PANTHER" id="PTHR43775">
    <property type="entry name" value="FATTY ACID SYNTHASE"/>
    <property type="match status" value="1"/>
</dbReference>
<dbReference type="PANTHER" id="PTHR43775:SF37">
    <property type="entry name" value="SI:DKEY-61P9.11"/>
    <property type="match status" value="1"/>
</dbReference>
<dbReference type="Pfam" id="PF00109">
    <property type="entry name" value="ketoacyl-synt"/>
    <property type="match status" value="4"/>
</dbReference>
<dbReference type="Pfam" id="PF02801">
    <property type="entry name" value="Ketoacyl-synt_C"/>
    <property type="match status" value="4"/>
</dbReference>
<dbReference type="Pfam" id="PF08659">
    <property type="entry name" value="KR"/>
    <property type="match status" value="2"/>
</dbReference>
<dbReference type="Pfam" id="PF21089">
    <property type="entry name" value="PKS_DH_N"/>
    <property type="match status" value="2"/>
</dbReference>
<dbReference type="Pfam" id="PF00550">
    <property type="entry name" value="PP-binding"/>
    <property type="match status" value="5"/>
</dbReference>
<dbReference type="Pfam" id="PF14765">
    <property type="entry name" value="PS-DH"/>
    <property type="match status" value="2"/>
</dbReference>
<dbReference type="Pfam" id="PF22336">
    <property type="entry name" value="RhiE-like_linker"/>
    <property type="match status" value="3"/>
</dbReference>
<dbReference type="SMART" id="SM00826">
    <property type="entry name" value="PKS_DH"/>
    <property type="match status" value="1"/>
</dbReference>
<dbReference type="SMART" id="SM00822">
    <property type="entry name" value="PKS_KR"/>
    <property type="match status" value="2"/>
</dbReference>
<dbReference type="SMART" id="SM00825">
    <property type="entry name" value="PKS_KS"/>
    <property type="match status" value="4"/>
</dbReference>
<dbReference type="SMART" id="SM00823">
    <property type="entry name" value="PKS_PP"/>
    <property type="match status" value="5"/>
</dbReference>
<dbReference type="SMART" id="SM01294">
    <property type="entry name" value="PKS_PP_betabranch"/>
    <property type="match status" value="3"/>
</dbReference>
<dbReference type="SUPFAM" id="SSF47336">
    <property type="entry name" value="ACP-like"/>
    <property type="match status" value="4"/>
</dbReference>
<dbReference type="SUPFAM" id="SSF51735">
    <property type="entry name" value="NAD(P)-binding Rossmann-fold domains"/>
    <property type="match status" value="3"/>
</dbReference>
<dbReference type="SUPFAM" id="SSF56821">
    <property type="entry name" value="Prismane protein-like"/>
    <property type="match status" value="1"/>
</dbReference>
<dbReference type="SUPFAM" id="SSF53901">
    <property type="entry name" value="Thiolase-like"/>
    <property type="match status" value="4"/>
</dbReference>
<dbReference type="PROSITE" id="PS50075">
    <property type="entry name" value="CARRIER"/>
    <property type="match status" value="5"/>
</dbReference>
<dbReference type="PROSITE" id="PS00606">
    <property type="entry name" value="KS3_1"/>
    <property type="match status" value="1"/>
</dbReference>
<dbReference type="PROSITE" id="PS52004">
    <property type="entry name" value="KS3_2"/>
    <property type="match status" value="4"/>
</dbReference>
<dbReference type="PROSITE" id="PS00012">
    <property type="entry name" value="PHOSPHOPANTETHEINE"/>
    <property type="match status" value="5"/>
</dbReference>
<dbReference type="PROSITE" id="PS52019">
    <property type="entry name" value="PKS_MFAS_DH"/>
    <property type="match status" value="2"/>
</dbReference>
<name>PKSL_BACSU</name>